<accession>Q750A4</accession>
<sequence length="204" mass="22525">MVCGESNAAAISAKYVDNDPLQRPAARATPANESHICDLMPPKGWKKDAQGNYPTTSYIKEQEKLTVDDLLFPRSIITSLAKDAVHQAVQTAEQDPRVMLSKDASLALQRSSTVFVNHLLMHARQIAQSNDRKSCSGEDVLKALDQIGLAGFESVVRERVVEYEKEVQRRRAEKTPAADEGQAEEGDAADEEEGSHKRAKLDEH</sequence>
<proteinExistence type="inferred from homology"/>
<name>DPB4_EREGS</name>
<gene>
    <name type="primary">DPB4</name>
    <name type="ordered locus">AGR053W</name>
</gene>
<organism>
    <name type="scientific">Eremothecium gossypii (strain ATCC 10895 / CBS 109.51 / FGSC 9923 / NRRL Y-1056)</name>
    <name type="common">Yeast</name>
    <name type="synonym">Ashbya gossypii</name>
    <dbReference type="NCBI Taxonomy" id="284811"/>
    <lineage>
        <taxon>Eukaryota</taxon>
        <taxon>Fungi</taxon>
        <taxon>Dikarya</taxon>
        <taxon>Ascomycota</taxon>
        <taxon>Saccharomycotina</taxon>
        <taxon>Saccharomycetes</taxon>
        <taxon>Saccharomycetales</taxon>
        <taxon>Saccharomycetaceae</taxon>
        <taxon>Eremothecium</taxon>
    </lineage>
</organism>
<keyword id="KW-0235">DNA replication</keyword>
<keyword id="KW-0539">Nucleus</keyword>
<keyword id="KW-1185">Reference proteome</keyword>
<comment type="function">
    <text evidence="2">As accessory component of the DNA polymerase epsilon (DNA polymerase II) participates in chromosomal DNA replication.</text>
</comment>
<comment type="subunit">
    <text evidence="1">Heterotetramer. Consists of four subunits: POL2, DPB2, DPB3 and DPB4 (By similarity).</text>
</comment>
<comment type="subcellular location">
    <subcellularLocation>
        <location evidence="1">Nucleus</location>
    </subcellularLocation>
</comment>
<comment type="miscellaneous">
    <text>In eukaryotes there are five DNA polymerases: alpha, beta, gamma, delta, and epsilon which are responsible for different reactions of DNA synthesis.</text>
</comment>
<feature type="chain" id="PRO_0000191748" description="DNA polymerase epsilon subunit D">
    <location>
        <begin position="1"/>
        <end position="204"/>
    </location>
</feature>
<feature type="region of interest" description="Disordered" evidence="3">
    <location>
        <begin position="165"/>
        <end position="204"/>
    </location>
</feature>
<feature type="compositionally biased region" description="Basic and acidic residues" evidence="3">
    <location>
        <begin position="165"/>
        <end position="177"/>
    </location>
</feature>
<feature type="compositionally biased region" description="Acidic residues" evidence="3">
    <location>
        <begin position="181"/>
        <end position="193"/>
    </location>
</feature>
<feature type="compositionally biased region" description="Basic and acidic residues" evidence="3">
    <location>
        <begin position="194"/>
        <end position="204"/>
    </location>
</feature>
<reference key="1">
    <citation type="journal article" date="2004" name="Science">
        <title>The Ashbya gossypii genome as a tool for mapping the ancient Saccharomyces cerevisiae genome.</title>
        <authorList>
            <person name="Dietrich F.S."/>
            <person name="Voegeli S."/>
            <person name="Brachat S."/>
            <person name="Lerch A."/>
            <person name="Gates K."/>
            <person name="Steiner S."/>
            <person name="Mohr C."/>
            <person name="Poehlmann R."/>
            <person name="Luedi P."/>
            <person name="Choi S."/>
            <person name="Wing R.A."/>
            <person name="Flavier A."/>
            <person name="Gaffney T.D."/>
            <person name="Philippsen P."/>
        </authorList>
    </citation>
    <scope>NUCLEOTIDE SEQUENCE [LARGE SCALE GENOMIC DNA]</scope>
    <source>
        <strain>ATCC 10895 / CBS 109.51 / FGSC 9923 / NRRL Y-1056</strain>
    </source>
</reference>
<reference key="2">
    <citation type="journal article" date="2013" name="G3 (Bethesda)">
        <title>Genomes of Ashbya fungi isolated from insects reveal four mating-type loci, numerous translocations, lack of transposons, and distinct gene duplications.</title>
        <authorList>
            <person name="Dietrich F.S."/>
            <person name="Voegeli S."/>
            <person name="Kuo S."/>
            <person name="Philippsen P."/>
        </authorList>
    </citation>
    <scope>GENOME REANNOTATION</scope>
    <source>
        <strain>ATCC 10895 / CBS 109.51 / FGSC 9923 / NRRL Y-1056</strain>
    </source>
</reference>
<dbReference type="EMBL" id="AE016820">
    <property type="protein sequence ID" value="AAS54542.1"/>
    <property type="molecule type" value="Genomic_DNA"/>
</dbReference>
<dbReference type="RefSeq" id="NP_986718.1">
    <property type="nucleotide sequence ID" value="NM_211780.1"/>
</dbReference>
<dbReference type="SMR" id="Q750A4"/>
<dbReference type="FunCoup" id="Q750A4">
    <property type="interactions" value="257"/>
</dbReference>
<dbReference type="STRING" id="284811.Q750A4"/>
<dbReference type="EnsemblFungi" id="AAS54542">
    <property type="protein sequence ID" value="AAS54542"/>
    <property type="gene ID" value="AGOS_AGR053W"/>
</dbReference>
<dbReference type="GeneID" id="4623019"/>
<dbReference type="KEGG" id="ago:AGOS_AGR053W"/>
<dbReference type="eggNOG" id="KOG0870">
    <property type="taxonomic scope" value="Eukaryota"/>
</dbReference>
<dbReference type="HOGENOM" id="CLU_087036_1_0_1"/>
<dbReference type="InParanoid" id="Q750A4"/>
<dbReference type="OMA" id="ALDHIGH"/>
<dbReference type="OrthoDB" id="1707486at2759"/>
<dbReference type="Proteomes" id="UP000000591">
    <property type="component" value="Chromosome VII"/>
</dbReference>
<dbReference type="GO" id="GO:0008623">
    <property type="term" value="C:CHRAC"/>
    <property type="evidence" value="ECO:0000318"/>
    <property type="project" value="GO_Central"/>
</dbReference>
<dbReference type="GO" id="GO:0008622">
    <property type="term" value="C:epsilon DNA polymerase complex"/>
    <property type="evidence" value="ECO:0000318"/>
    <property type="project" value="GO_Central"/>
</dbReference>
<dbReference type="GO" id="GO:0043596">
    <property type="term" value="C:nuclear replication fork"/>
    <property type="evidence" value="ECO:0007669"/>
    <property type="project" value="EnsemblFungi"/>
</dbReference>
<dbReference type="GO" id="GO:0031490">
    <property type="term" value="F:chromatin DNA binding"/>
    <property type="evidence" value="ECO:0000318"/>
    <property type="project" value="GO_Central"/>
</dbReference>
<dbReference type="GO" id="GO:0030337">
    <property type="term" value="F:DNA polymerase processivity factor activity"/>
    <property type="evidence" value="ECO:0007669"/>
    <property type="project" value="EnsemblFungi"/>
</dbReference>
<dbReference type="GO" id="GO:0003690">
    <property type="term" value="F:double-stranded DNA binding"/>
    <property type="evidence" value="ECO:0007669"/>
    <property type="project" value="EnsemblFungi"/>
</dbReference>
<dbReference type="GO" id="GO:0031492">
    <property type="term" value="F:nucleosomal DNA binding"/>
    <property type="evidence" value="ECO:0007669"/>
    <property type="project" value="EnsemblFungi"/>
</dbReference>
<dbReference type="GO" id="GO:0046982">
    <property type="term" value="F:protein heterodimerization activity"/>
    <property type="evidence" value="ECO:0007669"/>
    <property type="project" value="InterPro"/>
</dbReference>
<dbReference type="GO" id="GO:0008310">
    <property type="term" value="F:single-stranded DNA 3'-5' DNA exonuclease activity"/>
    <property type="evidence" value="ECO:0007669"/>
    <property type="project" value="EnsemblFungi"/>
</dbReference>
<dbReference type="GO" id="GO:0003697">
    <property type="term" value="F:single-stranded DNA binding"/>
    <property type="evidence" value="ECO:0007669"/>
    <property type="project" value="EnsemblFungi"/>
</dbReference>
<dbReference type="GO" id="GO:0006974">
    <property type="term" value="P:DNA damage response"/>
    <property type="evidence" value="ECO:0000318"/>
    <property type="project" value="GO_Central"/>
</dbReference>
<dbReference type="GO" id="GO:0042276">
    <property type="term" value="P:error-prone translesion synthesis"/>
    <property type="evidence" value="ECO:0007669"/>
    <property type="project" value="EnsemblFungi"/>
</dbReference>
<dbReference type="GO" id="GO:0031507">
    <property type="term" value="P:heterochromatin formation"/>
    <property type="evidence" value="ECO:0000318"/>
    <property type="project" value="GO_Central"/>
</dbReference>
<dbReference type="GO" id="GO:0006272">
    <property type="term" value="P:leading strand elongation"/>
    <property type="evidence" value="ECO:0000318"/>
    <property type="project" value="GO_Central"/>
</dbReference>
<dbReference type="GO" id="GO:1903775">
    <property type="term" value="P:regulation of DNA double-strand break processing"/>
    <property type="evidence" value="ECO:0007669"/>
    <property type="project" value="EnsemblFungi"/>
</dbReference>
<dbReference type="CDD" id="cd22928">
    <property type="entry name" value="HFD_POLE3_DPB4"/>
    <property type="match status" value="1"/>
</dbReference>
<dbReference type="Gene3D" id="1.10.20.10">
    <property type="entry name" value="Histone, subunit A"/>
    <property type="match status" value="1"/>
</dbReference>
<dbReference type="InterPro" id="IPR003958">
    <property type="entry name" value="CBFA_NFYB_domain"/>
</dbReference>
<dbReference type="InterPro" id="IPR051377">
    <property type="entry name" value="DNA_Pol-Epsilon_Subunit"/>
</dbReference>
<dbReference type="InterPro" id="IPR009072">
    <property type="entry name" value="Histone-fold"/>
</dbReference>
<dbReference type="PANTHER" id="PTHR46172">
    <property type="entry name" value="DNA POLYMERASE EPSILON SUBUNIT 3"/>
    <property type="match status" value="1"/>
</dbReference>
<dbReference type="PANTHER" id="PTHR46172:SF1">
    <property type="entry name" value="DNA POLYMERASE EPSILON SUBUNIT 3"/>
    <property type="match status" value="1"/>
</dbReference>
<dbReference type="Pfam" id="PF00808">
    <property type="entry name" value="CBFD_NFYB_HMF"/>
    <property type="match status" value="1"/>
</dbReference>
<dbReference type="SUPFAM" id="SSF47113">
    <property type="entry name" value="Histone-fold"/>
    <property type="match status" value="1"/>
</dbReference>
<evidence type="ECO:0000250" key="1"/>
<evidence type="ECO:0000250" key="2">
    <source>
        <dbReference type="UniProtKB" id="Q04603"/>
    </source>
</evidence>
<evidence type="ECO:0000256" key="3">
    <source>
        <dbReference type="SAM" id="MobiDB-lite"/>
    </source>
</evidence>
<protein>
    <recommendedName>
        <fullName>DNA polymerase epsilon subunit D</fullName>
    </recommendedName>
    <alternativeName>
        <fullName>DNA polymerase II subunit D</fullName>
    </alternativeName>
</protein>